<dbReference type="EC" id="2.1.1.189" evidence="1"/>
<dbReference type="EMBL" id="CP000026">
    <property type="protein sequence ID" value="AAV77791.1"/>
    <property type="molecule type" value="Genomic_DNA"/>
</dbReference>
<dbReference type="RefSeq" id="WP_001149793.1">
    <property type="nucleotide sequence ID" value="NC_006511.1"/>
</dbReference>
<dbReference type="SMR" id="Q5PGN2"/>
<dbReference type="KEGG" id="spt:SPA1880"/>
<dbReference type="HOGENOM" id="CLU_014689_0_0_6"/>
<dbReference type="Proteomes" id="UP000008185">
    <property type="component" value="Chromosome"/>
</dbReference>
<dbReference type="GO" id="GO:0051539">
    <property type="term" value="F:4 iron, 4 sulfur cluster binding"/>
    <property type="evidence" value="ECO:0007669"/>
    <property type="project" value="UniProtKB-KW"/>
</dbReference>
<dbReference type="GO" id="GO:0005506">
    <property type="term" value="F:iron ion binding"/>
    <property type="evidence" value="ECO:0007669"/>
    <property type="project" value="UniProtKB-UniRule"/>
</dbReference>
<dbReference type="GO" id="GO:0070041">
    <property type="term" value="F:rRNA (uridine-C5-)-methyltransferase activity"/>
    <property type="evidence" value="ECO:0007669"/>
    <property type="project" value="UniProtKB-UniRule"/>
</dbReference>
<dbReference type="GO" id="GO:0070475">
    <property type="term" value="P:rRNA base methylation"/>
    <property type="evidence" value="ECO:0007669"/>
    <property type="project" value="TreeGrafter"/>
</dbReference>
<dbReference type="CDD" id="cd02440">
    <property type="entry name" value="AdoMet_MTases"/>
    <property type="match status" value="1"/>
</dbReference>
<dbReference type="FunFam" id="2.40.50.1070:FF:000002">
    <property type="entry name" value="23S rRNA (uracil(747)-C(5))-methyltransferase RlmC"/>
    <property type="match status" value="1"/>
</dbReference>
<dbReference type="FunFam" id="3.40.50.150:FF:000049">
    <property type="entry name" value="23S rRNA (uracil(747)-C(5))-methyltransferase RlmC"/>
    <property type="match status" value="1"/>
</dbReference>
<dbReference type="Gene3D" id="2.40.50.1070">
    <property type="match status" value="1"/>
</dbReference>
<dbReference type="Gene3D" id="3.40.50.150">
    <property type="entry name" value="Vaccinia Virus protein VP39"/>
    <property type="match status" value="1"/>
</dbReference>
<dbReference type="HAMAP" id="MF_01012">
    <property type="entry name" value="23SrRNA_methyltr_RlmC"/>
    <property type="match status" value="1"/>
</dbReference>
<dbReference type="InterPro" id="IPR011825">
    <property type="entry name" value="23SrRNA_MeTrfase_RlmC"/>
</dbReference>
<dbReference type="InterPro" id="IPR030390">
    <property type="entry name" value="MeTrfase_TrmA_AS"/>
</dbReference>
<dbReference type="InterPro" id="IPR030391">
    <property type="entry name" value="MeTrfase_TrmA_CS"/>
</dbReference>
<dbReference type="InterPro" id="IPR029063">
    <property type="entry name" value="SAM-dependent_MTases_sf"/>
</dbReference>
<dbReference type="InterPro" id="IPR010280">
    <property type="entry name" value="U5_MeTrfase_fam"/>
</dbReference>
<dbReference type="NCBIfam" id="TIGR02085">
    <property type="entry name" value="meth_trns_rumB"/>
    <property type="match status" value="1"/>
</dbReference>
<dbReference type="PANTHER" id="PTHR11061">
    <property type="entry name" value="RNA M5U METHYLTRANSFERASE"/>
    <property type="match status" value="1"/>
</dbReference>
<dbReference type="PANTHER" id="PTHR11061:SF30">
    <property type="entry name" value="TRNA (URACIL(54)-C(5))-METHYLTRANSFERASE"/>
    <property type="match status" value="1"/>
</dbReference>
<dbReference type="Pfam" id="PF05958">
    <property type="entry name" value="tRNA_U5-meth_tr"/>
    <property type="match status" value="1"/>
</dbReference>
<dbReference type="SUPFAM" id="SSF53335">
    <property type="entry name" value="S-adenosyl-L-methionine-dependent methyltransferases"/>
    <property type="match status" value="1"/>
</dbReference>
<dbReference type="PROSITE" id="PS51687">
    <property type="entry name" value="SAM_MT_RNA_M5U"/>
    <property type="match status" value="1"/>
</dbReference>
<dbReference type="PROSITE" id="PS01230">
    <property type="entry name" value="TRMA_1"/>
    <property type="match status" value="1"/>
</dbReference>
<dbReference type="PROSITE" id="PS01231">
    <property type="entry name" value="TRMA_2"/>
    <property type="match status" value="1"/>
</dbReference>
<proteinExistence type="inferred from homology"/>
<name>RLMC_SALPA</name>
<accession>Q5PGN2</accession>
<sequence length="375" mass="42029">MQCALYDAGRCRSCQWITQSVNEQLSAKTADLHRLLAGLPVEQWCAPTGGPEQHFRNKAKMVVSGSVEKPLFGMLHRDGTPVDLCGCPLYPASFAPVFSALKPFIARAGLTPYNVARKRGELKYLLLTESQFDGGMMLRFVLRSETKLTQLRAALPWLRAQLPQLRVITANIQPVHMAIMEGETEIYLTDQQALAERFNDVPLWIRPQSFFQTNPTVASRLYATARDWVGQLPVRHMWDLFCGVGGFGLHCATPQMQLTGIEIAPEAIACAKQSAAELGLTRLHFQALDSTQFATAQGETPDLVLVNPPRRGIGKPLCDYLAQMAPRFIIYSSCNAQTMAQDIRHLPNYRIQRVQLFDMFPHTAHYEVLTLLCRQ</sequence>
<protein>
    <recommendedName>
        <fullName evidence="1">23S rRNA (uracil(747)-C(5))-methyltransferase RlmC</fullName>
        <ecNumber evidence="1">2.1.1.189</ecNumber>
    </recommendedName>
    <alternativeName>
        <fullName evidence="1">23S rRNA(m5U747)-methyltransferase</fullName>
    </alternativeName>
</protein>
<reference key="1">
    <citation type="journal article" date="2004" name="Nat. Genet.">
        <title>Comparison of genome degradation in Paratyphi A and Typhi, human-restricted serovars of Salmonella enterica that cause typhoid.</title>
        <authorList>
            <person name="McClelland M."/>
            <person name="Sanderson K.E."/>
            <person name="Clifton S.W."/>
            <person name="Latreille P."/>
            <person name="Porwollik S."/>
            <person name="Sabo A."/>
            <person name="Meyer R."/>
            <person name="Bieri T."/>
            <person name="Ozersky P."/>
            <person name="McLellan M."/>
            <person name="Harkins C.R."/>
            <person name="Wang C."/>
            <person name="Nguyen C."/>
            <person name="Berghoff A."/>
            <person name="Elliott G."/>
            <person name="Kohlberg S."/>
            <person name="Strong C."/>
            <person name="Du F."/>
            <person name="Carter J."/>
            <person name="Kremizki C."/>
            <person name="Layman D."/>
            <person name="Leonard S."/>
            <person name="Sun H."/>
            <person name="Fulton L."/>
            <person name="Nash W."/>
            <person name="Miner T."/>
            <person name="Minx P."/>
            <person name="Delehaunty K."/>
            <person name="Fronick C."/>
            <person name="Magrini V."/>
            <person name="Nhan M."/>
            <person name="Warren W."/>
            <person name="Florea L."/>
            <person name="Spieth J."/>
            <person name="Wilson R.K."/>
        </authorList>
    </citation>
    <scope>NUCLEOTIDE SEQUENCE [LARGE SCALE GENOMIC DNA]</scope>
    <source>
        <strain>ATCC 9150 / SARB42</strain>
    </source>
</reference>
<feature type="chain" id="PRO_0000282011" description="23S rRNA (uracil(747)-C(5))-methyltransferase RlmC">
    <location>
        <begin position="1"/>
        <end position="375"/>
    </location>
</feature>
<feature type="active site" description="Nucleophile" evidence="1">
    <location>
        <position position="334"/>
    </location>
</feature>
<feature type="binding site" evidence="1">
    <location>
        <position position="3"/>
    </location>
    <ligand>
        <name>[4Fe-4S] cluster</name>
        <dbReference type="ChEBI" id="CHEBI:49883"/>
    </ligand>
</feature>
<feature type="binding site" evidence="1">
    <location>
        <position position="11"/>
    </location>
    <ligand>
        <name>[4Fe-4S] cluster</name>
        <dbReference type="ChEBI" id="CHEBI:49883"/>
    </ligand>
</feature>
<feature type="binding site" evidence="1">
    <location>
        <position position="14"/>
    </location>
    <ligand>
        <name>[4Fe-4S] cluster</name>
        <dbReference type="ChEBI" id="CHEBI:49883"/>
    </ligand>
</feature>
<feature type="binding site" evidence="1">
    <location>
        <position position="87"/>
    </location>
    <ligand>
        <name>[4Fe-4S] cluster</name>
        <dbReference type="ChEBI" id="CHEBI:49883"/>
    </ligand>
</feature>
<feature type="binding site" evidence="1">
    <location>
        <position position="212"/>
    </location>
    <ligand>
        <name>S-adenosyl-L-methionine</name>
        <dbReference type="ChEBI" id="CHEBI:59789"/>
    </ligand>
</feature>
<feature type="binding site" evidence="1">
    <location>
        <position position="241"/>
    </location>
    <ligand>
        <name>S-adenosyl-L-methionine</name>
        <dbReference type="ChEBI" id="CHEBI:59789"/>
    </ligand>
</feature>
<feature type="binding site" evidence="1">
    <location>
        <position position="262"/>
    </location>
    <ligand>
        <name>S-adenosyl-L-methionine</name>
        <dbReference type="ChEBI" id="CHEBI:59789"/>
    </ligand>
</feature>
<feature type="binding site" evidence="1">
    <location>
        <position position="307"/>
    </location>
    <ligand>
        <name>S-adenosyl-L-methionine</name>
        <dbReference type="ChEBI" id="CHEBI:59789"/>
    </ligand>
</feature>
<keyword id="KW-0004">4Fe-4S</keyword>
<keyword id="KW-0408">Iron</keyword>
<keyword id="KW-0411">Iron-sulfur</keyword>
<keyword id="KW-0479">Metal-binding</keyword>
<keyword id="KW-0489">Methyltransferase</keyword>
<keyword id="KW-0698">rRNA processing</keyword>
<keyword id="KW-0949">S-adenosyl-L-methionine</keyword>
<keyword id="KW-0808">Transferase</keyword>
<organism>
    <name type="scientific">Salmonella paratyphi A (strain ATCC 9150 / SARB42)</name>
    <dbReference type="NCBI Taxonomy" id="295319"/>
    <lineage>
        <taxon>Bacteria</taxon>
        <taxon>Pseudomonadati</taxon>
        <taxon>Pseudomonadota</taxon>
        <taxon>Gammaproteobacteria</taxon>
        <taxon>Enterobacterales</taxon>
        <taxon>Enterobacteriaceae</taxon>
        <taxon>Salmonella</taxon>
    </lineage>
</organism>
<gene>
    <name evidence="1" type="primary">rlmC</name>
    <name type="synonym">rumB</name>
    <name type="ordered locus">SPA1880</name>
</gene>
<evidence type="ECO:0000255" key="1">
    <source>
        <dbReference type="HAMAP-Rule" id="MF_01012"/>
    </source>
</evidence>
<comment type="function">
    <text evidence="1">Catalyzes the formation of 5-methyl-uridine at position 747 (m5U747) in 23S rRNA.</text>
</comment>
<comment type="catalytic activity">
    <reaction evidence="1">
        <text>uridine(747) in 23S rRNA + S-adenosyl-L-methionine = 5-methyluridine(747) in 23S rRNA + S-adenosyl-L-homocysteine + H(+)</text>
        <dbReference type="Rhea" id="RHEA:42628"/>
        <dbReference type="Rhea" id="RHEA-COMP:10154"/>
        <dbReference type="Rhea" id="RHEA-COMP:10155"/>
        <dbReference type="ChEBI" id="CHEBI:15378"/>
        <dbReference type="ChEBI" id="CHEBI:57856"/>
        <dbReference type="ChEBI" id="CHEBI:59789"/>
        <dbReference type="ChEBI" id="CHEBI:65315"/>
        <dbReference type="ChEBI" id="CHEBI:74447"/>
        <dbReference type="EC" id="2.1.1.189"/>
    </reaction>
</comment>
<comment type="similarity">
    <text evidence="1">Belongs to the class I-like SAM-binding methyltransferase superfamily. RNA M5U methyltransferase family. RlmC subfamily.</text>
</comment>